<keyword id="KW-0687">Ribonucleoprotein</keyword>
<keyword id="KW-0689">Ribosomal protein</keyword>
<keyword id="KW-0694">RNA-binding</keyword>
<keyword id="KW-0699">rRNA-binding</keyword>
<dbReference type="EMBL" id="CP001014">
    <property type="protein sequence ID" value="ACB40181.1"/>
    <property type="molecule type" value="Genomic_DNA"/>
</dbReference>
<dbReference type="RefSeq" id="WP_012350600.1">
    <property type="nucleotide sequence ID" value="NC_010525.1"/>
</dbReference>
<dbReference type="SMR" id="B1Y8V2"/>
<dbReference type="STRING" id="444157.Tneu_1254"/>
<dbReference type="GeneID" id="6165968"/>
<dbReference type="KEGG" id="tne:Tneu_1254"/>
<dbReference type="eggNOG" id="arCOG04088">
    <property type="taxonomic scope" value="Archaea"/>
</dbReference>
<dbReference type="HOGENOM" id="CLU_056222_2_0_2"/>
<dbReference type="OrthoDB" id="8644at2157"/>
<dbReference type="Proteomes" id="UP000001694">
    <property type="component" value="Chromosome"/>
</dbReference>
<dbReference type="GO" id="GO:0022625">
    <property type="term" value="C:cytosolic large ribosomal subunit"/>
    <property type="evidence" value="ECO:0007669"/>
    <property type="project" value="TreeGrafter"/>
</dbReference>
<dbReference type="GO" id="GO:0008097">
    <property type="term" value="F:5S rRNA binding"/>
    <property type="evidence" value="ECO:0007669"/>
    <property type="project" value="InterPro"/>
</dbReference>
<dbReference type="GO" id="GO:0003735">
    <property type="term" value="F:structural constituent of ribosome"/>
    <property type="evidence" value="ECO:0007669"/>
    <property type="project" value="InterPro"/>
</dbReference>
<dbReference type="GO" id="GO:0000027">
    <property type="term" value="P:ribosomal large subunit assembly"/>
    <property type="evidence" value="ECO:0007669"/>
    <property type="project" value="TreeGrafter"/>
</dbReference>
<dbReference type="GO" id="GO:0006412">
    <property type="term" value="P:translation"/>
    <property type="evidence" value="ECO:0007669"/>
    <property type="project" value="UniProtKB-UniRule"/>
</dbReference>
<dbReference type="CDD" id="cd00432">
    <property type="entry name" value="Ribosomal_L18_L5e"/>
    <property type="match status" value="1"/>
</dbReference>
<dbReference type="FunFam" id="3.30.420.100:FF:000008">
    <property type="entry name" value="50S ribosomal protein L18"/>
    <property type="match status" value="1"/>
</dbReference>
<dbReference type="Gene3D" id="3.30.420.100">
    <property type="match status" value="1"/>
</dbReference>
<dbReference type="HAMAP" id="MF_01337_A">
    <property type="entry name" value="Ribosomal_uL18_A"/>
    <property type="match status" value="1"/>
</dbReference>
<dbReference type="InterPro" id="IPR005485">
    <property type="entry name" value="Rbsml_uL18_euk"/>
</dbReference>
<dbReference type="NCBIfam" id="NF006342">
    <property type="entry name" value="PRK08569.1"/>
    <property type="match status" value="1"/>
</dbReference>
<dbReference type="PANTHER" id="PTHR23410:SF12">
    <property type="entry name" value="LARGE RIBOSOMAL SUBUNIT PROTEIN UL18"/>
    <property type="match status" value="1"/>
</dbReference>
<dbReference type="PANTHER" id="PTHR23410">
    <property type="entry name" value="RIBOSOMAL PROTEIN L5-RELATED"/>
    <property type="match status" value="1"/>
</dbReference>
<dbReference type="Pfam" id="PF17144">
    <property type="entry name" value="Ribosomal_L5e"/>
    <property type="match status" value="2"/>
</dbReference>
<dbReference type="SUPFAM" id="SSF53137">
    <property type="entry name" value="Translational machinery components"/>
    <property type="match status" value="1"/>
</dbReference>
<reference key="1">
    <citation type="submission" date="2008-03" db="EMBL/GenBank/DDBJ databases">
        <title>Complete sequence of Thermoproteus neutrophilus V24Sta.</title>
        <authorList>
            <consortium name="US DOE Joint Genome Institute"/>
            <person name="Copeland A."/>
            <person name="Lucas S."/>
            <person name="Lapidus A."/>
            <person name="Glavina del Rio T."/>
            <person name="Dalin E."/>
            <person name="Tice H."/>
            <person name="Bruce D."/>
            <person name="Goodwin L."/>
            <person name="Pitluck S."/>
            <person name="Sims D."/>
            <person name="Brettin T."/>
            <person name="Detter J.C."/>
            <person name="Han C."/>
            <person name="Kuske C.R."/>
            <person name="Schmutz J."/>
            <person name="Larimer F."/>
            <person name="Land M."/>
            <person name="Hauser L."/>
            <person name="Kyrpides N."/>
            <person name="Mikhailova N."/>
            <person name="Biddle J.F."/>
            <person name="Zhang Z."/>
            <person name="Fitz-Gibbon S.T."/>
            <person name="Lowe T.M."/>
            <person name="Saltikov C."/>
            <person name="House C.H."/>
            <person name="Richardson P."/>
        </authorList>
    </citation>
    <scope>NUCLEOTIDE SEQUENCE [LARGE SCALE GENOMIC DNA]</scope>
    <source>
        <strain>DSM 2338 / JCM 9278 / NBRC 100436 / V24Sta</strain>
    </source>
</reference>
<comment type="function">
    <text evidence="1">This is one of the proteins that bind and probably mediate the attachment of the 5S RNA into the large ribosomal subunit, where it forms part of the central protuberance.</text>
</comment>
<comment type="subunit">
    <text evidence="1">Part of the 50S ribosomal subunit. Contacts the 5S and 23S rRNAs.</text>
</comment>
<comment type="similarity">
    <text evidence="1">Belongs to the universal ribosomal protein uL18 family.</text>
</comment>
<accession>B1Y8V2</accession>
<organism>
    <name type="scientific">Pyrobaculum neutrophilum (strain DSM 2338 / JCM 9278 / NBRC 100436 / V24Sta)</name>
    <name type="common">Thermoproteus neutrophilus</name>
    <dbReference type="NCBI Taxonomy" id="444157"/>
    <lineage>
        <taxon>Archaea</taxon>
        <taxon>Thermoproteota</taxon>
        <taxon>Thermoprotei</taxon>
        <taxon>Thermoproteales</taxon>
        <taxon>Thermoproteaceae</taxon>
        <taxon>Pyrobaculum</taxon>
    </lineage>
</organism>
<proteinExistence type="inferred from homology"/>
<feature type="chain" id="PRO_1000142729" description="Large ribosomal subunit protein uL18">
    <location>
        <begin position="1"/>
        <end position="205"/>
    </location>
</feature>
<sequence>MARGPRYKVPFRRRREGLTNYRKRRRLILSRKPRLVVRKTNKHIIAQVVVAKPQGDVTIVGVDTRALAKFGWRGDENNTSAAYLLGLVAGYKARLRGVREAVLDIGLHRPVAGSRVFAVLKGALDAGLEIPHGEEVLPEDDRVSGKHVAEYAAKLKEENPELYKARFSRYLQRGVQPEDLPKHFEEVKKKIVEHYEAKLAKAVAQ</sequence>
<gene>
    <name evidence="1" type="primary">rpl18</name>
    <name type="ordered locus">Tneu_1254</name>
</gene>
<evidence type="ECO:0000255" key="1">
    <source>
        <dbReference type="HAMAP-Rule" id="MF_01337"/>
    </source>
</evidence>
<evidence type="ECO:0000305" key="2"/>
<protein>
    <recommendedName>
        <fullName evidence="1">Large ribosomal subunit protein uL18</fullName>
    </recommendedName>
    <alternativeName>
        <fullName evidence="2">50S ribosomal protein L18</fullName>
    </alternativeName>
</protein>
<name>RL18_PYRNV</name>